<reference key="1">
    <citation type="journal article" date="2009" name="Appl. Environ. Microbiol.">
        <title>Rhizobium sp. strain NGR234 possesses a remarkable number of secretion systems.</title>
        <authorList>
            <person name="Schmeisser C."/>
            <person name="Liesegang H."/>
            <person name="Krysciak D."/>
            <person name="Bakkou N."/>
            <person name="Le Quere A."/>
            <person name="Wollherr A."/>
            <person name="Heinemeyer I."/>
            <person name="Morgenstern B."/>
            <person name="Pommerening-Roeser A."/>
            <person name="Flores M."/>
            <person name="Palacios R."/>
            <person name="Brenner S."/>
            <person name="Gottschalk G."/>
            <person name="Schmitz R.A."/>
            <person name="Broughton W.J."/>
            <person name="Perret X."/>
            <person name="Strittmatter A.W."/>
            <person name="Streit W.R."/>
        </authorList>
    </citation>
    <scope>NUCLEOTIDE SEQUENCE [LARGE SCALE GENOMIC DNA]</scope>
    <source>
        <strain>NBRC 101917 / NGR234</strain>
    </source>
</reference>
<dbReference type="EC" id="2.7.2.8" evidence="1"/>
<dbReference type="EMBL" id="CP001389">
    <property type="protein sequence ID" value="ACP23878.1"/>
    <property type="molecule type" value="Genomic_DNA"/>
</dbReference>
<dbReference type="RefSeq" id="WP_012706663.1">
    <property type="nucleotide sequence ID" value="NC_012587.1"/>
</dbReference>
<dbReference type="RefSeq" id="YP_002824631.1">
    <property type="nucleotide sequence ID" value="NC_012587.1"/>
</dbReference>
<dbReference type="SMR" id="C3MF41"/>
<dbReference type="STRING" id="394.NGR_c00740"/>
<dbReference type="KEGG" id="rhi:NGR_c00740"/>
<dbReference type="PATRIC" id="fig|394.7.peg.2867"/>
<dbReference type="eggNOG" id="COG0548">
    <property type="taxonomic scope" value="Bacteria"/>
</dbReference>
<dbReference type="HOGENOM" id="CLU_053680_0_0_5"/>
<dbReference type="OrthoDB" id="9803155at2"/>
<dbReference type="UniPathway" id="UPA00068">
    <property type="reaction ID" value="UER00107"/>
</dbReference>
<dbReference type="Proteomes" id="UP000001054">
    <property type="component" value="Chromosome"/>
</dbReference>
<dbReference type="GO" id="GO:0005737">
    <property type="term" value="C:cytoplasm"/>
    <property type="evidence" value="ECO:0007669"/>
    <property type="project" value="UniProtKB-SubCell"/>
</dbReference>
<dbReference type="GO" id="GO:0003991">
    <property type="term" value="F:acetylglutamate kinase activity"/>
    <property type="evidence" value="ECO:0007669"/>
    <property type="project" value="UniProtKB-UniRule"/>
</dbReference>
<dbReference type="GO" id="GO:0005524">
    <property type="term" value="F:ATP binding"/>
    <property type="evidence" value="ECO:0007669"/>
    <property type="project" value="UniProtKB-UniRule"/>
</dbReference>
<dbReference type="GO" id="GO:0042450">
    <property type="term" value="P:arginine biosynthetic process via ornithine"/>
    <property type="evidence" value="ECO:0007669"/>
    <property type="project" value="UniProtKB-UniRule"/>
</dbReference>
<dbReference type="GO" id="GO:0006526">
    <property type="term" value="P:L-arginine biosynthetic process"/>
    <property type="evidence" value="ECO:0007669"/>
    <property type="project" value="UniProtKB-UniPathway"/>
</dbReference>
<dbReference type="CDD" id="cd04250">
    <property type="entry name" value="AAK_NAGK-C"/>
    <property type="match status" value="1"/>
</dbReference>
<dbReference type="FunFam" id="3.40.1160.10:FF:000004">
    <property type="entry name" value="Acetylglutamate kinase"/>
    <property type="match status" value="1"/>
</dbReference>
<dbReference type="Gene3D" id="3.40.1160.10">
    <property type="entry name" value="Acetylglutamate kinase-like"/>
    <property type="match status" value="1"/>
</dbReference>
<dbReference type="HAMAP" id="MF_00082">
    <property type="entry name" value="ArgB"/>
    <property type="match status" value="1"/>
</dbReference>
<dbReference type="InterPro" id="IPR036393">
    <property type="entry name" value="AceGlu_kinase-like_sf"/>
</dbReference>
<dbReference type="InterPro" id="IPR004662">
    <property type="entry name" value="AcgluKinase_fam"/>
</dbReference>
<dbReference type="InterPro" id="IPR037528">
    <property type="entry name" value="ArgB"/>
</dbReference>
<dbReference type="InterPro" id="IPR001048">
    <property type="entry name" value="Asp/Glu/Uridylate_kinase"/>
</dbReference>
<dbReference type="InterPro" id="IPR001057">
    <property type="entry name" value="Glu/AcGlu_kinase"/>
</dbReference>
<dbReference type="InterPro" id="IPR041727">
    <property type="entry name" value="NAGK-C"/>
</dbReference>
<dbReference type="NCBIfam" id="TIGR00761">
    <property type="entry name" value="argB"/>
    <property type="match status" value="1"/>
</dbReference>
<dbReference type="PANTHER" id="PTHR23342">
    <property type="entry name" value="N-ACETYLGLUTAMATE SYNTHASE"/>
    <property type="match status" value="1"/>
</dbReference>
<dbReference type="PANTHER" id="PTHR23342:SF0">
    <property type="entry name" value="N-ACETYLGLUTAMATE SYNTHASE, MITOCHONDRIAL"/>
    <property type="match status" value="1"/>
</dbReference>
<dbReference type="Pfam" id="PF00696">
    <property type="entry name" value="AA_kinase"/>
    <property type="match status" value="1"/>
</dbReference>
<dbReference type="PIRSF" id="PIRSF000728">
    <property type="entry name" value="NAGK"/>
    <property type="match status" value="1"/>
</dbReference>
<dbReference type="PRINTS" id="PR00474">
    <property type="entry name" value="GLU5KINASE"/>
</dbReference>
<dbReference type="SUPFAM" id="SSF53633">
    <property type="entry name" value="Carbamate kinase-like"/>
    <property type="match status" value="1"/>
</dbReference>
<accession>C3MF41</accession>
<organism>
    <name type="scientific">Sinorhizobium fredii (strain NBRC 101917 / NGR234)</name>
    <dbReference type="NCBI Taxonomy" id="394"/>
    <lineage>
        <taxon>Bacteria</taxon>
        <taxon>Pseudomonadati</taxon>
        <taxon>Pseudomonadota</taxon>
        <taxon>Alphaproteobacteria</taxon>
        <taxon>Hyphomicrobiales</taxon>
        <taxon>Rhizobiaceae</taxon>
        <taxon>Sinorhizobium/Ensifer group</taxon>
        <taxon>Sinorhizobium</taxon>
    </lineage>
</organism>
<proteinExistence type="inferred from homology"/>
<name>ARGB_SINFN</name>
<feature type="chain" id="PRO_1000118360" description="Acetylglutamate kinase">
    <location>
        <begin position="1"/>
        <end position="295"/>
    </location>
</feature>
<feature type="binding site" evidence="1">
    <location>
        <begin position="66"/>
        <end position="67"/>
    </location>
    <ligand>
        <name>substrate</name>
    </ligand>
</feature>
<feature type="binding site" evidence="1">
    <location>
        <position position="88"/>
    </location>
    <ligand>
        <name>substrate</name>
    </ligand>
</feature>
<feature type="binding site" evidence="1">
    <location>
        <position position="193"/>
    </location>
    <ligand>
        <name>substrate</name>
    </ligand>
</feature>
<feature type="site" description="Transition state stabilizer" evidence="1">
    <location>
        <position position="31"/>
    </location>
</feature>
<feature type="site" description="Transition state stabilizer" evidence="1">
    <location>
        <position position="253"/>
    </location>
</feature>
<keyword id="KW-0028">Amino-acid biosynthesis</keyword>
<keyword id="KW-0055">Arginine biosynthesis</keyword>
<keyword id="KW-0067">ATP-binding</keyword>
<keyword id="KW-0963">Cytoplasm</keyword>
<keyword id="KW-0418">Kinase</keyword>
<keyword id="KW-0547">Nucleotide-binding</keyword>
<keyword id="KW-1185">Reference proteome</keyword>
<keyword id="KW-0808">Transferase</keyword>
<evidence type="ECO:0000255" key="1">
    <source>
        <dbReference type="HAMAP-Rule" id="MF_00082"/>
    </source>
</evidence>
<gene>
    <name evidence="1" type="primary">argB</name>
    <name type="ordered locus">NGR_c00740</name>
</gene>
<comment type="function">
    <text evidence="1">Catalyzes the ATP-dependent phosphorylation of N-acetyl-L-glutamate.</text>
</comment>
<comment type="catalytic activity">
    <reaction evidence="1">
        <text>N-acetyl-L-glutamate + ATP = N-acetyl-L-glutamyl 5-phosphate + ADP</text>
        <dbReference type="Rhea" id="RHEA:14629"/>
        <dbReference type="ChEBI" id="CHEBI:30616"/>
        <dbReference type="ChEBI" id="CHEBI:44337"/>
        <dbReference type="ChEBI" id="CHEBI:57936"/>
        <dbReference type="ChEBI" id="CHEBI:456216"/>
        <dbReference type="EC" id="2.7.2.8"/>
    </reaction>
</comment>
<comment type="pathway">
    <text evidence="1">Amino-acid biosynthesis; L-arginine biosynthesis; N(2)-acetyl-L-ornithine from L-glutamate: step 2/4.</text>
</comment>
<comment type="subcellular location">
    <subcellularLocation>
        <location evidence="1">Cytoplasm</location>
    </subcellularLocation>
</comment>
<comment type="similarity">
    <text evidence="1">Belongs to the acetylglutamate kinase family. ArgB subfamily.</text>
</comment>
<protein>
    <recommendedName>
        <fullName evidence="1">Acetylglutamate kinase</fullName>
        <ecNumber evidence="1">2.7.2.8</ecNumber>
    </recommendedName>
    <alternativeName>
        <fullName evidence="1">N-acetyl-L-glutamate 5-phosphotransferase</fullName>
    </alternativeName>
    <alternativeName>
        <fullName evidence="1">NAG kinase</fullName>
        <shortName evidence="1">NAGK</shortName>
    </alternativeName>
</protein>
<sequence length="295" mass="31221">MSASESEIQARLLAQALPYMQRYENKTIVVKYGGHAMGNPELGRAFASDIALLKQSGVNPIVVHGGGPQIGAMLNKMGIESKFEGGLRVTDEKTVEIVEMVLAGSINKEIVALINQTGEWAIGLCGKDGNMVFAEKARKTIKDPDSNIERILDLGFVGEVVEVDRTLLDLLARSEMIPVIAPVAPGRDGHTYNINADTFAGAIAGALNATRLLFLTDVPGVLDKQGNLIKELSVAQAHALIADGTISGGMIPKVETCMEAIKAGVQGVVILNGKTAHSVLLEIFTERGAGTLIVP</sequence>